<sequence>MARSRLPATSLRKPWKLDRQKLPSPDSGHSLLCGWSPGGKARPAGNTGAWAPAEQFFPASNRTREGGGLWPPLPLQSSPAAPTMLDSSAAEQVTRLTLKLLGQKLEQERQNVEGGPEGLHLEPGNEDRPDDALQTALKRRRDLLQRLREQHLLDELSRAQAWSGPSRGALGSALPPELPPTGILPTASPSPLAPDPPRIILPTVPQPPATIIQQLPQQPLIAQIPPPQAFPTQRSGSIKEDMVELLLLQNAQVHQLVLQNWMLKALPPALQDPPHVPPRVPRAARPRLPAVHHHHHHHHAVWPPGAATVLQPAPSLWTPGPP</sequence>
<dbReference type="EMBL" id="AK098098">
    <property type="protein sequence ID" value="BAC05232.1"/>
    <property type="molecule type" value="mRNA"/>
</dbReference>
<dbReference type="EMBL" id="AK056387">
    <property type="protein sequence ID" value="BAG51693.1"/>
    <property type="molecule type" value="mRNA"/>
</dbReference>
<dbReference type="EMBL" id="AP000471">
    <property type="status" value="NOT_ANNOTATED_CDS"/>
    <property type="molecule type" value="Genomic_DNA"/>
</dbReference>
<dbReference type="EMBL" id="AY039243">
    <property type="protein sequence ID" value="AAK72408.1"/>
    <property type="status" value="ALT_INIT"/>
    <property type="molecule type" value="mRNA"/>
</dbReference>
<dbReference type="EMBL" id="AY039244">
    <property type="protein sequence ID" value="AAK72409.1"/>
    <property type="status" value="ALT_INIT"/>
    <property type="molecule type" value="mRNA"/>
</dbReference>
<dbReference type="CCDS" id="CCDS13735.1">
    <molecule id="P58505-1"/>
</dbReference>
<dbReference type="CCDS" id="CCDS68229.1">
    <molecule id="P58505-3"/>
</dbReference>
<dbReference type="RefSeq" id="NP_001273391.1">
    <molecule id="P58505-3"/>
    <property type="nucleotide sequence ID" value="NM_001286462.2"/>
</dbReference>
<dbReference type="RefSeq" id="NP_001273392.1">
    <molecule id="P58505-3"/>
    <property type="nucleotide sequence ID" value="NM_001286463.1"/>
</dbReference>
<dbReference type="RefSeq" id="NP_001273405.1">
    <molecule id="P58505-3"/>
    <property type="nucleotide sequence ID" value="NM_001286476.2"/>
</dbReference>
<dbReference type="RefSeq" id="NP_001273406.1">
    <molecule id="P58505-3"/>
    <property type="nucleotide sequence ID" value="NM_001286477.2"/>
</dbReference>
<dbReference type="RefSeq" id="NP_478060.2">
    <molecule id="P58505-1"/>
    <property type="nucleotide sequence ID" value="NM_058180.4"/>
</dbReference>
<dbReference type="RefSeq" id="XP_005261205.1">
    <molecule id="P58505-1"/>
    <property type="nucleotide sequence ID" value="XM_005261148.6"/>
</dbReference>
<dbReference type="RefSeq" id="XP_006724081.1">
    <molecule id="P58505-2"/>
    <property type="nucleotide sequence ID" value="XM_006724018.5"/>
</dbReference>
<dbReference type="RefSeq" id="XP_011527921.1">
    <molecule id="P58505-1"/>
    <property type="nucleotide sequence ID" value="XM_011529619.4"/>
</dbReference>
<dbReference type="RefSeq" id="XP_011527922.1">
    <molecule id="P58505-1"/>
    <property type="nucleotide sequence ID" value="XM_011529620.4"/>
</dbReference>
<dbReference type="RefSeq" id="XP_011527927.1">
    <property type="nucleotide sequence ID" value="XM_011529625.2"/>
</dbReference>
<dbReference type="RefSeq" id="XP_011527928.1">
    <property type="nucleotide sequence ID" value="XM_011529626.2"/>
</dbReference>
<dbReference type="RefSeq" id="XP_011527929.1">
    <property type="nucleotide sequence ID" value="XM_011529627.2"/>
</dbReference>
<dbReference type="RefSeq" id="XP_016883877.1">
    <property type="nucleotide sequence ID" value="XM_017028388.1"/>
</dbReference>
<dbReference type="RefSeq" id="XP_016883878.1">
    <property type="nucleotide sequence ID" value="XM_017028389.1"/>
</dbReference>
<dbReference type="RefSeq" id="XP_016883879.1">
    <property type="nucleotide sequence ID" value="XM_017028390.1"/>
</dbReference>
<dbReference type="RefSeq" id="XP_016883880.1">
    <property type="nucleotide sequence ID" value="XM_017028391.1"/>
</dbReference>
<dbReference type="RefSeq" id="XP_016883881.1">
    <molecule id="P58505-3"/>
    <property type="nucleotide sequence ID" value="XM_017028392.2"/>
</dbReference>
<dbReference type="RefSeq" id="XP_016883882.1">
    <molecule id="P58505-3"/>
    <property type="nucleotide sequence ID" value="XM_017028393.2"/>
</dbReference>
<dbReference type="RefSeq" id="XP_054180612.1">
    <molecule id="P58505-1"/>
    <property type="nucleotide sequence ID" value="XM_054324637.1"/>
</dbReference>
<dbReference type="RefSeq" id="XP_054180613.1">
    <molecule id="P58505-1"/>
    <property type="nucleotide sequence ID" value="XM_054324638.1"/>
</dbReference>
<dbReference type="RefSeq" id="XP_054180614.1">
    <molecule id="P58505-1"/>
    <property type="nucleotide sequence ID" value="XM_054324639.1"/>
</dbReference>
<dbReference type="RefSeq" id="XP_054180618.1">
    <molecule id="P58505-2"/>
    <property type="nucleotide sequence ID" value="XM_054324643.1"/>
</dbReference>
<dbReference type="RefSeq" id="XP_054180626.1">
    <molecule id="P58505-3"/>
    <property type="nucleotide sequence ID" value="XM_054324651.1"/>
</dbReference>
<dbReference type="RefSeq" id="XP_054180627.1">
    <molecule id="P58505-3"/>
    <property type="nucleotide sequence ID" value="XM_054324652.1"/>
</dbReference>
<dbReference type="SMR" id="P58505"/>
<dbReference type="BioGRID" id="119868">
    <property type="interactions" value="21"/>
</dbReference>
<dbReference type="FunCoup" id="P58505">
    <property type="interactions" value="44"/>
</dbReference>
<dbReference type="IntAct" id="P58505">
    <property type="interactions" value="6"/>
</dbReference>
<dbReference type="MINT" id="P58505"/>
<dbReference type="STRING" id="9606.ENSP00000291691"/>
<dbReference type="GlyGen" id="P58505">
    <property type="glycosylation" value="1 site"/>
</dbReference>
<dbReference type="iPTMnet" id="P58505"/>
<dbReference type="PhosphoSitePlus" id="P58505"/>
<dbReference type="BioMuta" id="C21orf58"/>
<dbReference type="DMDM" id="215274005"/>
<dbReference type="MassIVE" id="P58505"/>
<dbReference type="PaxDb" id="9606-ENSP00000291691"/>
<dbReference type="PeptideAtlas" id="P58505"/>
<dbReference type="Antibodypedia" id="24660">
    <property type="antibodies" value="69 antibodies from 18 providers"/>
</dbReference>
<dbReference type="DNASU" id="54058"/>
<dbReference type="Ensembl" id="ENST00000291691.12">
    <molecule id="P58505-1"/>
    <property type="protein sequence ID" value="ENSP00000291691.8"/>
    <property type="gene ID" value="ENSG00000160298.18"/>
</dbReference>
<dbReference type="Ensembl" id="ENST00000397679.5">
    <molecule id="P58505-3"/>
    <property type="protein sequence ID" value="ENSP00000380796.1"/>
    <property type="gene ID" value="ENSG00000160298.18"/>
</dbReference>
<dbReference type="Ensembl" id="ENST00000397680.5">
    <molecule id="P58505-3"/>
    <property type="protein sequence ID" value="ENSP00000380797.1"/>
    <property type="gene ID" value="ENSG00000160298.18"/>
</dbReference>
<dbReference type="Ensembl" id="ENST00000397682.7">
    <molecule id="P58505-3"/>
    <property type="protein sequence ID" value="ENSP00000380798.3"/>
    <property type="gene ID" value="ENSG00000160298.18"/>
</dbReference>
<dbReference type="Ensembl" id="ENST00000397683.5">
    <molecule id="P58505-3"/>
    <property type="protein sequence ID" value="ENSP00000380799.1"/>
    <property type="gene ID" value="ENSG00000160298.18"/>
</dbReference>
<dbReference type="GeneID" id="54058"/>
<dbReference type="KEGG" id="hsa:54058"/>
<dbReference type="MANE-Select" id="ENST00000291691.12">
    <property type="protein sequence ID" value="ENSP00000291691.8"/>
    <property type="RefSeq nucleotide sequence ID" value="NM_058180.5"/>
    <property type="RefSeq protein sequence ID" value="NP_478060.2"/>
</dbReference>
<dbReference type="UCSC" id="uc002zja.3">
    <property type="organism name" value="human"/>
</dbReference>
<dbReference type="UCSC" id="uc002zjf.5">
    <molecule id="P58505-1"/>
    <property type="organism name" value="human"/>
</dbReference>
<dbReference type="AGR" id="HGNC:1300"/>
<dbReference type="CTD" id="54058"/>
<dbReference type="DisGeNET" id="54058"/>
<dbReference type="GeneCards" id="C21orf58"/>
<dbReference type="HGNC" id="HGNC:1300">
    <property type="gene designation" value="C21orf58"/>
</dbReference>
<dbReference type="HPA" id="ENSG00000160298">
    <property type="expression patterns" value="Tissue enhanced (fallopian tube, pituitary gland)"/>
</dbReference>
<dbReference type="neXtProt" id="NX_P58505"/>
<dbReference type="OpenTargets" id="ENSG00000160298"/>
<dbReference type="PharmGKB" id="PA25853"/>
<dbReference type="VEuPathDB" id="HostDB:ENSG00000160298"/>
<dbReference type="eggNOG" id="ENOG502QV5Q">
    <property type="taxonomic scope" value="Eukaryota"/>
</dbReference>
<dbReference type="GeneTree" id="ENSGT00390000011514"/>
<dbReference type="InParanoid" id="P58505"/>
<dbReference type="OMA" id="LKPHHIY"/>
<dbReference type="OrthoDB" id="8962708at2759"/>
<dbReference type="PAN-GO" id="P58505">
    <property type="GO annotations" value="0 GO annotations based on evolutionary models"/>
</dbReference>
<dbReference type="PhylomeDB" id="P58505"/>
<dbReference type="TreeFam" id="TF336319"/>
<dbReference type="PathwayCommons" id="P58505"/>
<dbReference type="SignaLink" id="P58505"/>
<dbReference type="BioGRID-ORCS" id="54058">
    <property type="hits" value="14 hits in 1127 CRISPR screens"/>
</dbReference>
<dbReference type="ChiTaRS" id="C21orf58">
    <property type="organism name" value="human"/>
</dbReference>
<dbReference type="GenomeRNAi" id="54058"/>
<dbReference type="Pharos" id="P58505">
    <property type="development level" value="Tdark"/>
</dbReference>
<dbReference type="PRO" id="PR:P58505"/>
<dbReference type="Proteomes" id="UP000005640">
    <property type="component" value="Chromosome 21"/>
</dbReference>
<dbReference type="RNAct" id="P58505">
    <property type="molecule type" value="protein"/>
</dbReference>
<dbReference type="Bgee" id="ENSG00000160298">
    <property type="expression patterns" value="Expressed in right uterine tube and 104 other cell types or tissues"/>
</dbReference>
<dbReference type="ExpressionAtlas" id="P58505">
    <property type="expression patterns" value="baseline and differential"/>
</dbReference>
<dbReference type="InterPro" id="IPR027904">
    <property type="entry name" value="DUF4587"/>
</dbReference>
<dbReference type="InterPro" id="IPR038915">
    <property type="entry name" value="PRR29-like"/>
</dbReference>
<dbReference type="PANTHER" id="PTHR28604">
    <property type="match status" value="1"/>
</dbReference>
<dbReference type="PANTHER" id="PTHR28604:SF2">
    <property type="entry name" value="RIKEN CDNA 2610028H24 GENE"/>
    <property type="match status" value="1"/>
</dbReference>
<dbReference type="Pfam" id="PF15248">
    <property type="entry name" value="DUF4587"/>
    <property type="match status" value="1"/>
</dbReference>
<proteinExistence type="evidence at protein level"/>
<reference key="1">
    <citation type="journal article" date="2004" name="Nat. Genet.">
        <title>Complete sequencing and characterization of 21,243 full-length human cDNAs.</title>
        <authorList>
            <person name="Ota T."/>
            <person name="Suzuki Y."/>
            <person name="Nishikawa T."/>
            <person name="Otsuki T."/>
            <person name="Sugiyama T."/>
            <person name="Irie R."/>
            <person name="Wakamatsu A."/>
            <person name="Hayashi K."/>
            <person name="Sato H."/>
            <person name="Nagai K."/>
            <person name="Kimura K."/>
            <person name="Makita H."/>
            <person name="Sekine M."/>
            <person name="Obayashi M."/>
            <person name="Nishi T."/>
            <person name="Shibahara T."/>
            <person name="Tanaka T."/>
            <person name="Ishii S."/>
            <person name="Yamamoto J."/>
            <person name="Saito K."/>
            <person name="Kawai Y."/>
            <person name="Isono Y."/>
            <person name="Nakamura Y."/>
            <person name="Nagahari K."/>
            <person name="Murakami K."/>
            <person name="Yasuda T."/>
            <person name="Iwayanagi T."/>
            <person name="Wagatsuma M."/>
            <person name="Shiratori A."/>
            <person name="Sudo H."/>
            <person name="Hosoiri T."/>
            <person name="Kaku Y."/>
            <person name="Kodaira H."/>
            <person name="Kondo H."/>
            <person name="Sugawara M."/>
            <person name="Takahashi M."/>
            <person name="Kanda K."/>
            <person name="Yokoi T."/>
            <person name="Furuya T."/>
            <person name="Kikkawa E."/>
            <person name="Omura Y."/>
            <person name="Abe K."/>
            <person name="Kamihara K."/>
            <person name="Katsuta N."/>
            <person name="Sato K."/>
            <person name="Tanikawa M."/>
            <person name="Yamazaki M."/>
            <person name="Ninomiya K."/>
            <person name="Ishibashi T."/>
            <person name="Yamashita H."/>
            <person name="Murakawa K."/>
            <person name="Fujimori K."/>
            <person name="Tanai H."/>
            <person name="Kimata M."/>
            <person name="Watanabe M."/>
            <person name="Hiraoka S."/>
            <person name="Chiba Y."/>
            <person name="Ishida S."/>
            <person name="Ono Y."/>
            <person name="Takiguchi S."/>
            <person name="Watanabe S."/>
            <person name="Yosida M."/>
            <person name="Hotuta T."/>
            <person name="Kusano J."/>
            <person name="Kanehori K."/>
            <person name="Takahashi-Fujii A."/>
            <person name="Hara H."/>
            <person name="Tanase T.-O."/>
            <person name="Nomura Y."/>
            <person name="Togiya S."/>
            <person name="Komai F."/>
            <person name="Hara R."/>
            <person name="Takeuchi K."/>
            <person name="Arita M."/>
            <person name="Imose N."/>
            <person name="Musashino K."/>
            <person name="Yuuki H."/>
            <person name="Oshima A."/>
            <person name="Sasaki N."/>
            <person name="Aotsuka S."/>
            <person name="Yoshikawa Y."/>
            <person name="Matsunawa H."/>
            <person name="Ichihara T."/>
            <person name="Shiohata N."/>
            <person name="Sano S."/>
            <person name="Moriya S."/>
            <person name="Momiyama H."/>
            <person name="Satoh N."/>
            <person name="Takami S."/>
            <person name="Terashima Y."/>
            <person name="Suzuki O."/>
            <person name="Nakagawa S."/>
            <person name="Senoh A."/>
            <person name="Mizoguchi H."/>
            <person name="Goto Y."/>
            <person name="Shimizu F."/>
            <person name="Wakebe H."/>
            <person name="Hishigaki H."/>
            <person name="Watanabe T."/>
            <person name="Sugiyama A."/>
            <person name="Takemoto M."/>
            <person name="Kawakami B."/>
            <person name="Yamazaki M."/>
            <person name="Watanabe K."/>
            <person name="Kumagai A."/>
            <person name="Itakura S."/>
            <person name="Fukuzumi Y."/>
            <person name="Fujimori Y."/>
            <person name="Komiyama M."/>
            <person name="Tashiro H."/>
            <person name="Tanigami A."/>
            <person name="Fujiwara T."/>
            <person name="Ono T."/>
            <person name="Yamada K."/>
            <person name="Fujii Y."/>
            <person name="Ozaki K."/>
            <person name="Hirao M."/>
            <person name="Ohmori Y."/>
            <person name="Kawabata A."/>
            <person name="Hikiji T."/>
            <person name="Kobatake N."/>
            <person name="Inagaki H."/>
            <person name="Ikema Y."/>
            <person name="Okamoto S."/>
            <person name="Okitani R."/>
            <person name="Kawakami T."/>
            <person name="Noguchi S."/>
            <person name="Itoh T."/>
            <person name="Shigeta K."/>
            <person name="Senba T."/>
            <person name="Matsumura K."/>
            <person name="Nakajima Y."/>
            <person name="Mizuno T."/>
            <person name="Morinaga M."/>
            <person name="Sasaki M."/>
            <person name="Togashi T."/>
            <person name="Oyama M."/>
            <person name="Hata H."/>
            <person name="Watanabe M."/>
            <person name="Komatsu T."/>
            <person name="Mizushima-Sugano J."/>
            <person name="Satoh T."/>
            <person name="Shirai Y."/>
            <person name="Takahashi Y."/>
            <person name="Nakagawa K."/>
            <person name="Okumura K."/>
            <person name="Nagase T."/>
            <person name="Nomura N."/>
            <person name="Kikuchi H."/>
            <person name="Masuho Y."/>
            <person name="Yamashita R."/>
            <person name="Nakai K."/>
            <person name="Yada T."/>
            <person name="Nakamura Y."/>
            <person name="Ohara O."/>
            <person name="Isogai T."/>
            <person name="Sugano S."/>
        </authorList>
    </citation>
    <scope>NUCLEOTIDE SEQUENCE [LARGE SCALE MRNA] (ISOFORMS 1 AND 3)</scope>
</reference>
<reference key="2">
    <citation type="journal article" date="2000" name="Nature">
        <title>The DNA sequence of human chromosome 21.</title>
        <authorList>
            <person name="Hattori M."/>
            <person name="Fujiyama A."/>
            <person name="Taylor T.D."/>
            <person name="Watanabe H."/>
            <person name="Yada T."/>
            <person name="Park H.-S."/>
            <person name="Toyoda A."/>
            <person name="Ishii K."/>
            <person name="Totoki Y."/>
            <person name="Choi D.-K."/>
            <person name="Groner Y."/>
            <person name="Soeda E."/>
            <person name="Ohki M."/>
            <person name="Takagi T."/>
            <person name="Sakaki Y."/>
            <person name="Taudien S."/>
            <person name="Blechschmidt K."/>
            <person name="Polley A."/>
            <person name="Menzel U."/>
            <person name="Delabar J."/>
            <person name="Kumpf K."/>
            <person name="Lehmann R."/>
            <person name="Patterson D."/>
            <person name="Reichwald K."/>
            <person name="Rump A."/>
            <person name="Schillhabel M."/>
            <person name="Schudy A."/>
            <person name="Zimmermann W."/>
            <person name="Rosenthal A."/>
            <person name="Kudoh J."/>
            <person name="Shibuya K."/>
            <person name="Kawasaki K."/>
            <person name="Asakawa S."/>
            <person name="Shintani A."/>
            <person name="Sasaki T."/>
            <person name="Nagamine K."/>
            <person name="Mitsuyama S."/>
            <person name="Antonarakis S.E."/>
            <person name="Minoshima S."/>
            <person name="Shimizu N."/>
            <person name="Nordsiek G."/>
            <person name="Hornischer K."/>
            <person name="Brandt P."/>
            <person name="Scharfe M."/>
            <person name="Schoen O."/>
            <person name="Desario A."/>
            <person name="Reichelt J."/>
            <person name="Kauer G."/>
            <person name="Bloecker H."/>
            <person name="Ramser J."/>
            <person name="Beck A."/>
            <person name="Klages S."/>
            <person name="Hennig S."/>
            <person name="Riesselmann L."/>
            <person name="Dagand E."/>
            <person name="Wehrmeyer S."/>
            <person name="Borzym K."/>
            <person name="Gardiner K."/>
            <person name="Nizetic D."/>
            <person name="Francis F."/>
            <person name="Lehrach H."/>
            <person name="Reinhardt R."/>
            <person name="Yaspo M.-L."/>
        </authorList>
    </citation>
    <scope>NUCLEOTIDE SEQUENCE [LARGE SCALE GENOMIC DNA]</scope>
</reference>
<reference key="3">
    <citation type="journal article" date="2001" name="Genomics">
        <title>From PREDs and open reading frames to cDNA isolation: revisiting the human chromosome 21 transcription map.</title>
        <authorList>
            <person name="Reymond A."/>
            <person name="Friedli M."/>
            <person name="Neergaard Henrichsen C."/>
            <person name="Chapot F."/>
            <person name="Deutsch S."/>
            <person name="Ucla C."/>
            <person name="Rossier C."/>
            <person name="Lyle R."/>
            <person name="Guipponi M."/>
            <person name="Antonarakis S.E."/>
        </authorList>
    </citation>
    <scope>NUCLEOTIDE SEQUENCE [MRNA] OF 39-322 (ISOFORMS 1 AND 2)</scope>
</reference>
<organism>
    <name type="scientific">Homo sapiens</name>
    <name type="common">Human</name>
    <dbReference type="NCBI Taxonomy" id="9606"/>
    <lineage>
        <taxon>Eukaryota</taxon>
        <taxon>Metazoa</taxon>
        <taxon>Chordata</taxon>
        <taxon>Craniata</taxon>
        <taxon>Vertebrata</taxon>
        <taxon>Euteleostomi</taxon>
        <taxon>Mammalia</taxon>
        <taxon>Eutheria</taxon>
        <taxon>Euarchontoglires</taxon>
        <taxon>Primates</taxon>
        <taxon>Haplorrhini</taxon>
        <taxon>Catarrhini</taxon>
        <taxon>Hominidae</taxon>
        <taxon>Homo</taxon>
    </lineage>
</organism>
<evidence type="ECO:0000256" key="1">
    <source>
        <dbReference type="SAM" id="MobiDB-lite"/>
    </source>
</evidence>
<evidence type="ECO:0000303" key="2">
    <source>
    </source>
</evidence>
<evidence type="ECO:0000305" key="3"/>
<comment type="alternative products">
    <event type="alternative splicing"/>
    <isoform>
        <id>P58505-1</id>
        <name>1</name>
        <sequence type="displayed"/>
    </isoform>
    <isoform>
        <id>P58505-2</id>
        <name>2</name>
        <sequence type="described" ref="VSP_003827 VSP_003828"/>
    </isoform>
    <isoform>
        <id>P58505-3</id>
        <name>3</name>
        <sequence type="described" ref="VSP_057984"/>
    </isoform>
</comment>
<comment type="tissue specificity">
    <text>Expressed in skin and fetal lung.</text>
</comment>
<comment type="sequence caution" evidence="3">
    <conflict type="erroneous initiation">
        <sequence resource="EMBL-CDS" id="AAK72408"/>
    </conflict>
    <text>Truncated N-terminus.</text>
</comment>
<comment type="sequence caution" evidence="3">
    <conflict type="erroneous initiation">
        <sequence resource="EMBL-CDS" id="AAK72409"/>
    </conflict>
    <text>Truncated N-terminus.</text>
</comment>
<accession>P58505</accession>
<accession>B3KPI1</accession>
<accession>Q8N7N9</accession>
<keyword id="KW-0025">Alternative splicing</keyword>
<keyword id="KW-1267">Proteomics identification</keyword>
<keyword id="KW-1185">Reference proteome</keyword>
<name>CU058_HUMAN</name>
<gene>
    <name type="primary">C21orf58</name>
</gene>
<feature type="chain" id="PRO_0000079521" description="Uncharacterized protein C21orf58">
    <location>
        <begin position="1"/>
        <end position="322"/>
    </location>
</feature>
<feature type="region of interest" description="Disordered" evidence="1">
    <location>
        <begin position="1"/>
        <end position="51"/>
    </location>
</feature>
<feature type="region of interest" description="Disordered" evidence="1">
    <location>
        <begin position="107"/>
        <end position="130"/>
    </location>
</feature>
<feature type="compositionally biased region" description="Basic and acidic residues" evidence="1">
    <location>
        <begin position="119"/>
        <end position="130"/>
    </location>
</feature>
<feature type="splice variant" id="VSP_057984" description="In isoform 3.">
    <original>MARSRLPATSLRKPWKLDRQKLPSPDSGHSLLCGWSPGGKARPAGNTGAWAPAEQFFPASNRTREGGGLWPPLPLQSSPAAPTMLDSSAAEQVTRLTLKLLGQKLEQERQNVEGGPEGLHLEPGNEDRPDDALQTALKRRRDLLQRLR</original>
    <variation>MAILPGEAPVPGPGWPEPDAGGASVALGLPVPVCSSSASALQ</variation>
    <location>
        <begin position="1"/>
        <end position="148"/>
    </location>
</feature>
<feature type="splice variant" id="VSP_003827" description="In isoform 2." evidence="2">
    <original>PPHVP</original>
    <variation>RFFHS</variation>
    <location>
        <begin position="273"/>
        <end position="277"/>
    </location>
</feature>
<feature type="splice variant" id="VSP_003828" description="In isoform 2." evidence="2">
    <location>
        <begin position="278"/>
        <end position="322"/>
    </location>
</feature>
<feature type="sequence conflict" description="In Ref. 1; BAG51693." evidence="3" ref="1">
    <original>N</original>
    <variation>D</variation>
    <location>
        <position position="111"/>
    </location>
</feature>
<protein>
    <recommendedName>
        <fullName>Uncharacterized protein C21orf58</fullName>
    </recommendedName>
</protein>